<comment type="function">
    <text evidence="1">Binds as a heterodimer with protein bS6 to the central domain of the 16S rRNA, where it helps stabilize the platform of the 30S subunit.</text>
</comment>
<comment type="subunit">
    <text evidence="1">Part of the 30S ribosomal subunit. Forms a tight heterodimer with protein bS6.</text>
</comment>
<comment type="similarity">
    <text evidence="1">Belongs to the bacterial ribosomal protein bS18 family.</text>
</comment>
<proteinExistence type="inferred from homology"/>
<keyword id="KW-1185">Reference proteome</keyword>
<keyword id="KW-0687">Ribonucleoprotein</keyword>
<keyword id="KW-0689">Ribosomal protein</keyword>
<keyword id="KW-0694">RNA-binding</keyword>
<keyword id="KW-0699">rRNA-binding</keyword>
<protein>
    <recommendedName>
        <fullName evidence="1">Small ribosomal subunit protein bS18</fullName>
    </recommendedName>
    <alternativeName>
        <fullName evidence="2">30S ribosomal protein S18</fullName>
    </alternativeName>
</protein>
<organism>
    <name type="scientific">Syntrophus aciditrophicus (strain SB)</name>
    <dbReference type="NCBI Taxonomy" id="56780"/>
    <lineage>
        <taxon>Bacteria</taxon>
        <taxon>Pseudomonadati</taxon>
        <taxon>Thermodesulfobacteriota</taxon>
        <taxon>Syntrophia</taxon>
        <taxon>Syntrophales</taxon>
        <taxon>Syntrophaceae</taxon>
        <taxon>Syntrophus</taxon>
    </lineage>
</organism>
<evidence type="ECO:0000255" key="1">
    <source>
        <dbReference type="HAMAP-Rule" id="MF_00270"/>
    </source>
</evidence>
<evidence type="ECO:0000305" key="2"/>
<gene>
    <name evidence="1" type="primary">rpsR</name>
    <name type="ordered locus">SYNAS_18760</name>
    <name type="ORF">SYN_00643</name>
</gene>
<accession>Q2LUJ7</accession>
<dbReference type="EMBL" id="CP000252">
    <property type="protein sequence ID" value="ABC77755.1"/>
    <property type="molecule type" value="Genomic_DNA"/>
</dbReference>
<dbReference type="RefSeq" id="WP_011417777.1">
    <property type="nucleotide sequence ID" value="NC_007759.1"/>
</dbReference>
<dbReference type="SMR" id="Q2LUJ7"/>
<dbReference type="FunCoup" id="Q2LUJ7">
    <property type="interactions" value="551"/>
</dbReference>
<dbReference type="STRING" id="56780.SYN_00643"/>
<dbReference type="KEGG" id="sat:SYN_00643"/>
<dbReference type="eggNOG" id="COG0238">
    <property type="taxonomic scope" value="Bacteria"/>
</dbReference>
<dbReference type="HOGENOM" id="CLU_148710_2_2_7"/>
<dbReference type="InParanoid" id="Q2LUJ7"/>
<dbReference type="OrthoDB" id="9812008at2"/>
<dbReference type="Proteomes" id="UP000001933">
    <property type="component" value="Chromosome"/>
</dbReference>
<dbReference type="GO" id="GO:0022627">
    <property type="term" value="C:cytosolic small ribosomal subunit"/>
    <property type="evidence" value="ECO:0007669"/>
    <property type="project" value="TreeGrafter"/>
</dbReference>
<dbReference type="GO" id="GO:0070181">
    <property type="term" value="F:small ribosomal subunit rRNA binding"/>
    <property type="evidence" value="ECO:0007669"/>
    <property type="project" value="TreeGrafter"/>
</dbReference>
<dbReference type="GO" id="GO:0003735">
    <property type="term" value="F:structural constituent of ribosome"/>
    <property type="evidence" value="ECO:0007669"/>
    <property type="project" value="InterPro"/>
</dbReference>
<dbReference type="GO" id="GO:0006412">
    <property type="term" value="P:translation"/>
    <property type="evidence" value="ECO:0007669"/>
    <property type="project" value="UniProtKB-UniRule"/>
</dbReference>
<dbReference type="Gene3D" id="4.10.640.10">
    <property type="entry name" value="Ribosomal protein S18"/>
    <property type="match status" value="1"/>
</dbReference>
<dbReference type="HAMAP" id="MF_00270">
    <property type="entry name" value="Ribosomal_bS18"/>
    <property type="match status" value="1"/>
</dbReference>
<dbReference type="InterPro" id="IPR001648">
    <property type="entry name" value="Ribosomal_bS18"/>
</dbReference>
<dbReference type="InterPro" id="IPR018275">
    <property type="entry name" value="Ribosomal_bS18_CS"/>
</dbReference>
<dbReference type="InterPro" id="IPR036870">
    <property type="entry name" value="Ribosomal_bS18_sf"/>
</dbReference>
<dbReference type="NCBIfam" id="TIGR00165">
    <property type="entry name" value="S18"/>
    <property type="match status" value="1"/>
</dbReference>
<dbReference type="PANTHER" id="PTHR13479">
    <property type="entry name" value="30S RIBOSOMAL PROTEIN S18"/>
    <property type="match status" value="1"/>
</dbReference>
<dbReference type="PANTHER" id="PTHR13479:SF40">
    <property type="entry name" value="SMALL RIBOSOMAL SUBUNIT PROTEIN BS18M"/>
    <property type="match status" value="1"/>
</dbReference>
<dbReference type="Pfam" id="PF01084">
    <property type="entry name" value="Ribosomal_S18"/>
    <property type="match status" value="1"/>
</dbReference>
<dbReference type="PRINTS" id="PR00974">
    <property type="entry name" value="RIBOSOMALS18"/>
</dbReference>
<dbReference type="SUPFAM" id="SSF46911">
    <property type="entry name" value="Ribosomal protein S18"/>
    <property type="match status" value="1"/>
</dbReference>
<dbReference type="PROSITE" id="PS00057">
    <property type="entry name" value="RIBOSOMAL_S18"/>
    <property type="match status" value="1"/>
</dbReference>
<feature type="chain" id="PRO_0000345555" description="Small ribosomal subunit protein bS18">
    <location>
        <begin position="1"/>
        <end position="88"/>
    </location>
</feature>
<sequence length="88" mass="10485">MAYERRSRPSGPRKKFFHRRKYCKFCSDSTIKIDYKRPDILHDYITERGKIMPRRITGSCSKHQRELTQAIKRARSIALLPFVVTEGR</sequence>
<name>RS18_SYNAS</name>
<reference key="1">
    <citation type="journal article" date="2007" name="Proc. Natl. Acad. Sci. U.S.A.">
        <title>The genome of Syntrophus aciditrophicus: life at the thermodynamic limit of microbial growth.</title>
        <authorList>
            <person name="McInerney M.J."/>
            <person name="Rohlin L."/>
            <person name="Mouttaki H."/>
            <person name="Kim U."/>
            <person name="Krupp R.S."/>
            <person name="Rios-Hernandez L."/>
            <person name="Sieber J."/>
            <person name="Struchtemeyer C.G."/>
            <person name="Bhattacharyya A."/>
            <person name="Campbell J.W."/>
            <person name="Gunsalus R.P."/>
        </authorList>
    </citation>
    <scope>NUCLEOTIDE SEQUENCE [LARGE SCALE GENOMIC DNA]</scope>
    <source>
        <strain>SB</strain>
    </source>
</reference>